<evidence type="ECO:0000250" key="1">
    <source>
        <dbReference type="UniProtKB" id="P68363"/>
    </source>
</evidence>
<evidence type="ECO:0000250" key="2">
    <source>
        <dbReference type="UniProtKB" id="Q13509"/>
    </source>
</evidence>
<evidence type="ECO:0000256" key="3">
    <source>
        <dbReference type="SAM" id="MobiDB-lite"/>
    </source>
</evidence>
<evidence type="ECO:0000269" key="4">
    <source>
    </source>
</evidence>
<evidence type="ECO:0000305" key="5"/>
<gene>
    <name type="primary">tubB</name>
    <name type="synonym">tubA</name>
    <name type="ORF">SNOG_06790</name>
    <name type="ORF">SNOG_06791</name>
</gene>
<organism>
    <name type="scientific">Phaeosphaeria nodorum (strain SN15 / ATCC MYA-4574 / FGSC 10173)</name>
    <name type="common">Glume blotch fungus</name>
    <name type="synonym">Parastagonospora nodorum</name>
    <dbReference type="NCBI Taxonomy" id="321614"/>
    <lineage>
        <taxon>Eukaryota</taxon>
        <taxon>Fungi</taxon>
        <taxon>Dikarya</taxon>
        <taxon>Ascomycota</taxon>
        <taxon>Pezizomycotina</taxon>
        <taxon>Dothideomycetes</taxon>
        <taxon>Pleosporomycetidae</taxon>
        <taxon>Pleosporales</taxon>
        <taxon>Pleosporineae</taxon>
        <taxon>Phaeosphaeriaceae</taxon>
        <taxon>Parastagonospora</taxon>
    </lineage>
</organism>
<name>TBB_PHANO</name>
<sequence length="447" mass="49827">MREIVHLQTGQCGNQIGAAFWQTISGEHGLDGSGVYNGTSDLQLERMNVYFNEASGNKFVPRAVLVDLEPGTMDAVRAGPFGQLFRPDNFVFGQSGAGNNWAKGHYTEGAELVDQVLDVVRREAEGCDCLQGFQITHSLGGGTGAGMGTLLISKIREEFPDRMMATFSVVPSPKVSDTVVEPYNATLSIHQLVENSDETFCIDNEALYDICMRTLKLNNPSYGDLNHLVSAVMSGVTTCLRFPGQLNSDLRKLAVNMVPFPRLHFFMVGFAPLTSRGAHSFRAVTVPELTQQMFDPKNMMAASDFRNGRYLTCSAYFRGKVSMKEVEDQMRNVQNKNSSYFVEWIPNNVQTALCSVPPRGLKMSATFVGNSTSIQELFKRIGDQFTAMFRRKAFLHWYTGEGMDEMEFTEAESNMNDLVSEYQQYQEASISEGEEEYDEEAPLEAEE</sequence>
<protein>
    <recommendedName>
        <fullName>Tubulin beta chain</fullName>
    </recommendedName>
    <alternativeName>
        <fullName>Beta-tubulin</fullName>
    </alternativeName>
</protein>
<reference key="1">
    <citation type="journal article" date="1993" name="Mol. Gen. Genet.">
        <title>Molecular analysis of the Septoria nodorum beta-tubulin gene and characterization of a benomyl-resistance mutation.</title>
        <authorList>
            <person name="Cooley R.N."/>
            <person name="Caten C.E."/>
        </authorList>
    </citation>
    <scope>NUCLEOTIDE SEQUENCE [GENOMIC DNA] OF MUTANT TUBAR</scope>
    <scope>VARIANT ARG-124</scope>
    <source>
        <strain>BSm300</strain>
    </source>
</reference>
<reference key="2">
    <citation type="journal article" date="2005" name="FEMS Microbiol. Lett.">
        <title>Sequence diversity of beta-tubulin (tubA) gene in Phaeosphaeria nodorum and P. avenaria.</title>
        <authorList>
            <person name="Malkus A."/>
            <person name="Reszka E."/>
            <person name="Chang C.-J."/>
            <person name="Arseniuk E."/>
            <person name="Chang P.-F.L."/>
            <person name="Ueng P.P."/>
        </authorList>
    </citation>
    <scope>NUCLEOTIDE SEQUENCE [GENOMIC DNA]</scope>
    <source>
        <strain>9074</strain>
        <strain>98-12981</strain>
        <strain>ATCC 200805 / S-82-13</strain>
        <strain>ATCC 200806 / S-74-20A</strain>
        <strain>S-80-301</strain>
        <strain>Sn26-1</strain>
        <strain>Sn27-1</strain>
        <strain>Sn37-1</strain>
        <strain>Sn48-1</strain>
    </source>
</reference>
<reference key="3">
    <citation type="journal article" date="2007" name="Plant Cell">
        <title>Dothideomycete-plant interactions illuminated by genome sequencing and EST analysis of the wheat pathogen Stagonospora nodorum.</title>
        <authorList>
            <person name="Hane J.K."/>
            <person name="Lowe R.G.T."/>
            <person name="Solomon P.S."/>
            <person name="Tan K.-C."/>
            <person name="Schoch C.L."/>
            <person name="Spatafora J.W."/>
            <person name="Crous P.W."/>
            <person name="Kodira C.D."/>
            <person name="Birren B.W."/>
            <person name="Galagan J.E."/>
            <person name="Torriani S.F.F."/>
            <person name="McDonald B.A."/>
            <person name="Oliver R.P."/>
        </authorList>
    </citation>
    <scope>NUCLEOTIDE SEQUENCE [LARGE SCALE GENOMIC DNA]</scope>
    <source>
        <strain>SN15 / ATCC MYA-4574 / FGSC 10173</strain>
    </source>
</reference>
<dbReference type="EMBL" id="S56922">
    <property type="protein sequence ID" value="AAB25800.1"/>
    <property type="molecule type" value="Genomic_DNA"/>
</dbReference>
<dbReference type="EMBL" id="AY786331">
    <property type="protein sequence ID" value="AAV53378.1"/>
    <property type="molecule type" value="Genomic_DNA"/>
</dbReference>
<dbReference type="EMBL" id="AY786332">
    <property type="protein sequence ID" value="AAV53379.1"/>
    <property type="molecule type" value="Genomic_DNA"/>
</dbReference>
<dbReference type="EMBL" id="AY786334">
    <property type="protein sequence ID" value="AAV53381.1"/>
    <property type="molecule type" value="Genomic_DNA"/>
</dbReference>
<dbReference type="EMBL" id="AY786335">
    <property type="protein sequence ID" value="AAV53382.1"/>
    <property type="molecule type" value="Genomic_DNA"/>
</dbReference>
<dbReference type="EMBL" id="AY786336">
    <property type="protein sequence ID" value="AAV53383.1"/>
    <property type="molecule type" value="Genomic_DNA"/>
</dbReference>
<dbReference type="EMBL" id="AY786337">
    <property type="protein sequence ID" value="AAV53384.1"/>
    <property type="molecule type" value="Genomic_DNA"/>
</dbReference>
<dbReference type="EMBL" id="AY786338">
    <property type="protein sequence ID" value="AAV53385.1"/>
    <property type="molecule type" value="Genomic_DNA"/>
</dbReference>
<dbReference type="EMBL" id="AY786339">
    <property type="protein sequence ID" value="AAV53386.1"/>
    <property type="molecule type" value="Genomic_DNA"/>
</dbReference>
<dbReference type="EMBL" id="AY823526">
    <property type="protein sequence ID" value="AAV83496.1"/>
    <property type="molecule type" value="Genomic_DNA"/>
</dbReference>
<dbReference type="EMBL" id="CH445334">
    <property type="protein sequence ID" value="EAT85442.2"/>
    <property type="status" value="ALT_SEQ"/>
    <property type="molecule type" value="Genomic_DNA"/>
</dbReference>
<dbReference type="PIR" id="S30254">
    <property type="entry name" value="S30254"/>
</dbReference>
<dbReference type="RefSeq" id="XP_001797153.1">
    <property type="nucleotide sequence ID" value="XM_001797101.1"/>
</dbReference>
<dbReference type="SMR" id="P41799"/>
<dbReference type="FunCoup" id="P41799">
    <property type="interactions" value="1173"/>
</dbReference>
<dbReference type="STRING" id="321614.P41799"/>
<dbReference type="GeneID" id="5974043"/>
<dbReference type="KEGG" id="pno:SNOG_06791"/>
<dbReference type="VEuPathDB" id="FungiDB:JI435_067910"/>
<dbReference type="InParanoid" id="P41799"/>
<dbReference type="OrthoDB" id="1662883at2759"/>
<dbReference type="Proteomes" id="UP000001055">
    <property type="component" value="Unassembled WGS sequence"/>
</dbReference>
<dbReference type="GO" id="GO:0005737">
    <property type="term" value="C:cytoplasm"/>
    <property type="evidence" value="ECO:0000318"/>
    <property type="project" value="GO_Central"/>
</dbReference>
<dbReference type="GO" id="GO:0005874">
    <property type="term" value="C:microtubule"/>
    <property type="evidence" value="ECO:0000318"/>
    <property type="project" value="GO_Central"/>
</dbReference>
<dbReference type="GO" id="GO:0005525">
    <property type="term" value="F:GTP binding"/>
    <property type="evidence" value="ECO:0000318"/>
    <property type="project" value="GO_Central"/>
</dbReference>
<dbReference type="GO" id="GO:0003924">
    <property type="term" value="F:GTPase activity"/>
    <property type="evidence" value="ECO:0007669"/>
    <property type="project" value="InterPro"/>
</dbReference>
<dbReference type="GO" id="GO:0046872">
    <property type="term" value="F:metal ion binding"/>
    <property type="evidence" value="ECO:0007669"/>
    <property type="project" value="UniProtKB-KW"/>
</dbReference>
<dbReference type="GO" id="GO:0005200">
    <property type="term" value="F:structural constituent of cytoskeleton"/>
    <property type="evidence" value="ECO:0000318"/>
    <property type="project" value="GO_Central"/>
</dbReference>
<dbReference type="GO" id="GO:0000226">
    <property type="term" value="P:microtubule cytoskeleton organization"/>
    <property type="evidence" value="ECO:0000318"/>
    <property type="project" value="GO_Central"/>
</dbReference>
<dbReference type="GO" id="GO:0000278">
    <property type="term" value="P:mitotic cell cycle"/>
    <property type="evidence" value="ECO:0000318"/>
    <property type="project" value="GO_Central"/>
</dbReference>
<dbReference type="CDD" id="cd02187">
    <property type="entry name" value="beta_tubulin"/>
    <property type="match status" value="1"/>
</dbReference>
<dbReference type="FunFam" id="1.10.287.600:FF:000003">
    <property type="entry name" value="Tubulin beta chain"/>
    <property type="match status" value="1"/>
</dbReference>
<dbReference type="FunFam" id="3.30.1330.20:FF:000002">
    <property type="entry name" value="Tubulin beta chain"/>
    <property type="match status" value="1"/>
</dbReference>
<dbReference type="FunFam" id="3.40.50.1440:FF:000009">
    <property type="entry name" value="Tubulin beta chain"/>
    <property type="match status" value="1"/>
</dbReference>
<dbReference type="Gene3D" id="1.10.287.600">
    <property type="entry name" value="Helix hairpin bin"/>
    <property type="match status" value="1"/>
</dbReference>
<dbReference type="Gene3D" id="3.30.1330.20">
    <property type="entry name" value="Tubulin/FtsZ, C-terminal domain"/>
    <property type="match status" value="1"/>
</dbReference>
<dbReference type="Gene3D" id="3.40.50.1440">
    <property type="entry name" value="Tubulin/FtsZ, GTPase domain"/>
    <property type="match status" value="1"/>
</dbReference>
<dbReference type="InterPro" id="IPR013838">
    <property type="entry name" value="Beta-tubulin_BS"/>
</dbReference>
<dbReference type="InterPro" id="IPR002453">
    <property type="entry name" value="Beta_tubulin"/>
</dbReference>
<dbReference type="InterPro" id="IPR008280">
    <property type="entry name" value="Tub_FtsZ_C"/>
</dbReference>
<dbReference type="InterPro" id="IPR000217">
    <property type="entry name" value="Tubulin"/>
</dbReference>
<dbReference type="InterPro" id="IPR037103">
    <property type="entry name" value="Tubulin/FtsZ-like_C"/>
</dbReference>
<dbReference type="InterPro" id="IPR018316">
    <property type="entry name" value="Tubulin/FtsZ_2-layer-sand-dom"/>
</dbReference>
<dbReference type="InterPro" id="IPR036525">
    <property type="entry name" value="Tubulin/FtsZ_GTPase_sf"/>
</dbReference>
<dbReference type="InterPro" id="IPR023123">
    <property type="entry name" value="Tubulin_C"/>
</dbReference>
<dbReference type="InterPro" id="IPR017975">
    <property type="entry name" value="Tubulin_CS"/>
</dbReference>
<dbReference type="InterPro" id="IPR003008">
    <property type="entry name" value="Tubulin_FtsZ_GTPase"/>
</dbReference>
<dbReference type="PANTHER" id="PTHR11588">
    <property type="entry name" value="TUBULIN"/>
    <property type="match status" value="1"/>
</dbReference>
<dbReference type="Pfam" id="PF00091">
    <property type="entry name" value="Tubulin"/>
    <property type="match status" value="1"/>
</dbReference>
<dbReference type="Pfam" id="PF03953">
    <property type="entry name" value="Tubulin_C"/>
    <property type="match status" value="1"/>
</dbReference>
<dbReference type="PRINTS" id="PR01163">
    <property type="entry name" value="BETATUBULIN"/>
</dbReference>
<dbReference type="PRINTS" id="PR01161">
    <property type="entry name" value="TUBULIN"/>
</dbReference>
<dbReference type="SMART" id="SM00864">
    <property type="entry name" value="Tubulin"/>
    <property type="match status" value="1"/>
</dbReference>
<dbReference type="SMART" id="SM00865">
    <property type="entry name" value="Tubulin_C"/>
    <property type="match status" value="1"/>
</dbReference>
<dbReference type="SUPFAM" id="SSF55307">
    <property type="entry name" value="Tubulin C-terminal domain-like"/>
    <property type="match status" value="1"/>
</dbReference>
<dbReference type="SUPFAM" id="SSF52490">
    <property type="entry name" value="Tubulin nucleotide-binding domain-like"/>
    <property type="match status" value="1"/>
</dbReference>
<dbReference type="PROSITE" id="PS00227">
    <property type="entry name" value="TUBULIN"/>
    <property type="match status" value="1"/>
</dbReference>
<dbReference type="PROSITE" id="PS00228">
    <property type="entry name" value="TUBULIN_B_AUTOREG"/>
    <property type="match status" value="1"/>
</dbReference>
<comment type="function">
    <text>Tubulin is the major constituent of microtubules, a cylinder consisting of laterally associated linear protofilaments composed of alpha- and beta-tubulin heterodimers. Microtubules grow by the addition of GTP-tubulin dimers to the microtubule end, where a stabilizing cap forms. Below the cap, tubulin dimers are in GDP-bound state, owing to GTPase activity of alpha-tubulin.</text>
</comment>
<comment type="cofactor">
    <cofactor evidence="1">
        <name>Mg(2+)</name>
        <dbReference type="ChEBI" id="CHEBI:18420"/>
    </cofactor>
</comment>
<comment type="subunit">
    <text>Dimer of alpha and beta chains. A typical microtubule is a hollow water-filled tube with an outer diameter of 25 nm and an inner diameter of 15 nM. Alpha-beta heterodimers associate head-to-tail to form protofilaments running lengthwise along the microtubule wall with the beta-tubulin subunit facing the microtubule plus end conferring a structural polarity. Microtubules usually have 13 protofilaments but different protofilament numbers can be found in some organisms and specialized cells.</text>
</comment>
<comment type="subcellular location">
    <subcellularLocation>
        <location>Cytoplasm</location>
        <location>Cytoskeleton</location>
    </subcellularLocation>
</comment>
<comment type="similarity">
    <text evidence="5">Belongs to the tubulin family.</text>
</comment>
<comment type="sequence caution" evidence="5">
    <conflict type="erroneous gene model prediction">
        <sequence resource="EMBL-CDS" id="EAT85442"/>
    </conflict>
</comment>
<comment type="sequence caution" evidence="5">
    <conflict type="frameshift">
        <sequence resource="EMBL-CDS" id="EAT85442"/>
    </conflict>
</comment>
<feature type="chain" id="PRO_0000048425" description="Tubulin beta chain">
    <location>
        <begin position="1"/>
        <end position="447"/>
    </location>
</feature>
<feature type="region of interest" description="Disordered" evidence="3">
    <location>
        <begin position="425"/>
        <end position="447"/>
    </location>
</feature>
<feature type="compositionally biased region" description="Acidic residues" evidence="3">
    <location>
        <begin position="432"/>
        <end position="447"/>
    </location>
</feature>
<feature type="binding site" evidence="2">
    <location>
        <position position="11"/>
    </location>
    <ligand>
        <name>GTP</name>
        <dbReference type="ChEBI" id="CHEBI:37565"/>
    </ligand>
</feature>
<feature type="binding site" evidence="1">
    <location>
        <position position="69"/>
    </location>
    <ligand>
        <name>GTP</name>
        <dbReference type="ChEBI" id="CHEBI:37565"/>
    </ligand>
</feature>
<feature type="binding site" evidence="1">
    <location>
        <position position="69"/>
    </location>
    <ligand>
        <name>Mg(2+)</name>
        <dbReference type="ChEBI" id="CHEBI:18420"/>
    </ligand>
</feature>
<feature type="binding site" evidence="2">
    <location>
        <position position="138"/>
    </location>
    <ligand>
        <name>GTP</name>
        <dbReference type="ChEBI" id="CHEBI:37565"/>
    </ligand>
</feature>
<feature type="binding site" evidence="2">
    <location>
        <position position="142"/>
    </location>
    <ligand>
        <name>GTP</name>
        <dbReference type="ChEBI" id="CHEBI:37565"/>
    </ligand>
</feature>
<feature type="binding site" evidence="2">
    <location>
        <position position="143"/>
    </location>
    <ligand>
        <name>GTP</name>
        <dbReference type="ChEBI" id="CHEBI:37565"/>
    </ligand>
</feature>
<feature type="binding site" evidence="2">
    <location>
        <position position="144"/>
    </location>
    <ligand>
        <name>GTP</name>
        <dbReference type="ChEBI" id="CHEBI:37565"/>
    </ligand>
</feature>
<feature type="binding site" evidence="2">
    <location>
        <position position="204"/>
    </location>
    <ligand>
        <name>GTP</name>
        <dbReference type="ChEBI" id="CHEBI:37565"/>
    </ligand>
</feature>
<feature type="binding site" evidence="2">
    <location>
        <position position="226"/>
    </location>
    <ligand>
        <name>GTP</name>
        <dbReference type="ChEBI" id="CHEBI:37565"/>
    </ligand>
</feature>
<feature type="sequence variant" description="In strain: BSm300." evidence="4">
    <original>A</original>
    <variation>R</variation>
    <location>
        <position position="124"/>
    </location>
</feature>
<feature type="mutagenesis site" description="In tubAR; causes resistance to benomyl.">
    <original>H</original>
    <variation>Y</variation>
    <location>
        <position position="6"/>
    </location>
</feature>
<feature type="sequence conflict" description="In Ref. 3; EAT85442." evidence="5" ref="3">
    <original>S</original>
    <variation>Y</variation>
    <location>
        <position position="230"/>
    </location>
</feature>
<feature type="sequence conflict" description="In Ref. 3; EAT85442." evidence="5" ref="3">
    <original>T</original>
    <variation>P</variation>
    <location>
        <position position="238"/>
    </location>
</feature>
<feature type="sequence conflict" description="In Ref. 3; EAT85442." evidence="5" ref="3">
    <original>P</original>
    <variation>H</variation>
    <location>
        <position position="287"/>
    </location>
</feature>
<proteinExistence type="evidence at protein level"/>
<keyword id="KW-0963">Cytoplasm</keyword>
<keyword id="KW-0206">Cytoskeleton</keyword>
<keyword id="KW-0342">GTP-binding</keyword>
<keyword id="KW-0460">Magnesium</keyword>
<keyword id="KW-0479">Metal-binding</keyword>
<keyword id="KW-0493">Microtubule</keyword>
<keyword id="KW-0547">Nucleotide-binding</keyword>
<accession>P41799</accession>
<accession>Q0UN73</accession>
<accession>Q0UN74</accession>
<accession>Q5S3J6</accession>